<proteinExistence type="evidence at transcript level"/>
<accession>P46582</accession>
<evidence type="ECO:0000256" key="1">
    <source>
        <dbReference type="SAM" id="MobiDB-lite"/>
    </source>
</evidence>
<evidence type="ECO:0000269" key="2">
    <source>
    </source>
</evidence>
<evidence type="ECO:0000305" key="3"/>
<evidence type="ECO:0000312" key="4">
    <source>
        <dbReference type="WormBase" id="C34E10.8"/>
    </source>
</evidence>
<comment type="function">
    <text evidence="2">Nuclear factor that influences the activity of genes involved in vulval development.</text>
</comment>
<comment type="subcellular location">
    <subcellularLocation>
        <location evidence="2">Nucleus</location>
    </subcellularLocation>
    <subcellularLocation>
        <location evidence="2">Cytoplasm</location>
    </subcellularLocation>
    <subcellularLocation>
        <location evidence="2">Cell projection</location>
        <location evidence="2">Axon</location>
    </subcellularLocation>
    <text evidence="2">Expression is restricted to the nucleus in most cells, but it is also expressed in the cytoplasm and neuronal projections in neurons.</text>
</comment>
<comment type="developmental stage">
    <text evidence="2">Broadly expressed in neuronal, intestinal and in hypodermal cells, including hyp7 cells, throughout the larval stages and persisting into adulthood.</text>
</comment>
<name>SUMV1_CAEEL</name>
<dbReference type="EMBL" id="FO080774">
    <property type="protein sequence ID" value="CCD66652.1"/>
    <property type="molecule type" value="Genomic_DNA"/>
</dbReference>
<dbReference type="PIR" id="T15765">
    <property type="entry name" value="T15765"/>
</dbReference>
<dbReference type="RefSeq" id="NP_498116.2">
    <property type="nucleotide sequence ID" value="NM_065715.4"/>
</dbReference>
<dbReference type="SMR" id="P46582"/>
<dbReference type="BioGRID" id="40951">
    <property type="interactions" value="9"/>
</dbReference>
<dbReference type="FunCoup" id="P46582">
    <property type="interactions" value="1550"/>
</dbReference>
<dbReference type="IntAct" id="P46582">
    <property type="interactions" value="4"/>
</dbReference>
<dbReference type="MINT" id="P46582"/>
<dbReference type="STRING" id="6239.C34E10.8.1"/>
<dbReference type="iPTMnet" id="P46582"/>
<dbReference type="PaxDb" id="6239-C34E10.8"/>
<dbReference type="PeptideAtlas" id="P46582"/>
<dbReference type="EnsemblMetazoa" id="C34E10.8.1">
    <property type="protein sequence ID" value="C34E10.8.1"/>
    <property type="gene ID" value="WBGene00016409"/>
</dbReference>
<dbReference type="GeneID" id="175720"/>
<dbReference type="KEGG" id="cel:CELE_C34E10.8"/>
<dbReference type="UCSC" id="C34E10.8">
    <property type="organism name" value="c. elegans"/>
</dbReference>
<dbReference type="AGR" id="WB:WBGene00016409"/>
<dbReference type="CTD" id="175720"/>
<dbReference type="WormBase" id="C34E10.8">
    <property type="protein sequence ID" value="CE32158"/>
    <property type="gene ID" value="WBGene00016409"/>
    <property type="gene designation" value="sumv-1"/>
</dbReference>
<dbReference type="eggNOG" id="ENOG502TFSI">
    <property type="taxonomic scope" value="Eukaryota"/>
</dbReference>
<dbReference type="GeneTree" id="ENSGT00940000157974"/>
<dbReference type="HOGENOM" id="CLU_011386_0_0_1"/>
<dbReference type="InParanoid" id="P46582"/>
<dbReference type="OMA" id="YGECEYI"/>
<dbReference type="OrthoDB" id="5850696at2759"/>
<dbReference type="SignaLink" id="P46582"/>
<dbReference type="PRO" id="PR:P46582"/>
<dbReference type="Proteomes" id="UP000001940">
    <property type="component" value="Chromosome III"/>
</dbReference>
<dbReference type="Bgee" id="WBGene00016409">
    <property type="expression patterns" value="Expressed in embryo and 4 other cell types or tissues"/>
</dbReference>
<dbReference type="GO" id="GO:0030424">
    <property type="term" value="C:axon"/>
    <property type="evidence" value="ECO:0007669"/>
    <property type="project" value="UniProtKB-SubCell"/>
</dbReference>
<dbReference type="GO" id="GO:0005737">
    <property type="term" value="C:cytoplasm"/>
    <property type="evidence" value="ECO:0000314"/>
    <property type="project" value="WormBase"/>
</dbReference>
<dbReference type="GO" id="GO:0043005">
    <property type="term" value="C:neuron projection"/>
    <property type="evidence" value="ECO:0000314"/>
    <property type="project" value="WormBase"/>
</dbReference>
<dbReference type="GO" id="GO:0005634">
    <property type="term" value="C:nucleus"/>
    <property type="evidence" value="ECO:0000314"/>
    <property type="project" value="WormBase"/>
</dbReference>
<dbReference type="InterPro" id="IPR025927">
    <property type="entry name" value="Potential_DNA-bd"/>
</dbReference>
<dbReference type="PANTHER" id="PTHR16198">
    <property type="match status" value="1"/>
</dbReference>
<dbReference type="PANTHER" id="PTHR16198:SF2">
    <property type="entry name" value="INO80 COMPLEX SUBUNIT D"/>
    <property type="match status" value="1"/>
</dbReference>
<dbReference type="Pfam" id="PF13891">
    <property type="entry name" value="zf-C3Hc3H"/>
    <property type="match status" value="1"/>
</dbReference>
<feature type="chain" id="PRO_0000065224" description="Protein sumv-1" evidence="3">
    <location>
        <begin position="1"/>
        <end position="1024"/>
    </location>
</feature>
<feature type="region of interest" description="Disordered" evidence="1">
    <location>
        <begin position="447"/>
        <end position="486"/>
    </location>
</feature>
<feature type="region of interest" description="Disordered" evidence="1">
    <location>
        <begin position="501"/>
        <end position="564"/>
    </location>
</feature>
<feature type="region of interest" description="Disordered" evidence="1">
    <location>
        <begin position="577"/>
        <end position="617"/>
    </location>
</feature>
<feature type="region of interest" description="Disordered" evidence="1">
    <location>
        <begin position="645"/>
        <end position="664"/>
    </location>
</feature>
<feature type="region of interest" description="Disordered" evidence="1">
    <location>
        <begin position="710"/>
        <end position="739"/>
    </location>
</feature>
<feature type="region of interest" description="Disordered" evidence="1">
    <location>
        <begin position="773"/>
        <end position="1024"/>
    </location>
</feature>
<feature type="compositionally biased region" description="Polar residues" evidence="1">
    <location>
        <begin position="467"/>
        <end position="486"/>
    </location>
</feature>
<feature type="compositionally biased region" description="Polar residues" evidence="1">
    <location>
        <begin position="501"/>
        <end position="514"/>
    </location>
</feature>
<feature type="compositionally biased region" description="Polar residues" evidence="1">
    <location>
        <begin position="528"/>
        <end position="542"/>
    </location>
</feature>
<feature type="compositionally biased region" description="Low complexity" evidence="1">
    <location>
        <begin position="584"/>
        <end position="600"/>
    </location>
</feature>
<feature type="compositionally biased region" description="Polar residues" evidence="1">
    <location>
        <begin position="605"/>
        <end position="617"/>
    </location>
</feature>
<feature type="compositionally biased region" description="Low complexity" evidence="1">
    <location>
        <begin position="710"/>
        <end position="730"/>
    </location>
</feature>
<feature type="compositionally biased region" description="Low complexity" evidence="1">
    <location>
        <begin position="784"/>
        <end position="809"/>
    </location>
</feature>
<feature type="compositionally biased region" description="Polar residues" evidence="1">
    <location>
        <begin position="810"/>
        <end position="832"/>
    </location>
</feature>
<feature type="compositionally biased region" description="Low complexity" evidence="1">
    <location>
        <begin position="859"/>
        <end position="870"/>
    </location>
</feature>
<feature type="compositionally biased region" description="Polar residues" evidence="1">
    <location>
        <begin position="873"/>
        <end position="883"/>
    </location>
</feature>
<feature type="compositionally biased region" description="Basic and acidic residues" evidence="1">
    <location>
        <begin position="903"/>
        <end position="914"/>
    </location>
</feature>
<feature type="compositionally biased region" description="Low complexity" evidence="1">
    <location>
        <begin position="916"/>
        <end position="943"/>
    </location>
</feature>
<feature type="compositionally biased region" description="Low complexity" evidence="1">
    <location>
        <begin position="952"/>
        <end position="962"/>
    </location>
</feature>
<feature type="compositionally biased region" description="Low complexity" evidence="1">
    <location>
        <begin position="970"/>
        <end position="986"/>
    </location>
</feature>
<feature type="compositionally biased region" description="Polar residues" evidence="1">
    <location>
        <begin position="987"/>
        <end position="998"/>
    </location>
</feature>
<protein>
    <recommendedName>
        <fullName evidence="3">Protein sumv-1</fullName>
    </recommendedName>
    <alternativeName>
        <fullName evidence="4">Suppressor of synthetic multivulva protein 1</fullName>
    </alternativeName>
</protein>
<reference key="1">
    <citation type="journal article" date="1998" name="Science">
        <title>Genome sequence of the nematode C. elegans: a platform for investigating biology.</title>
        <authorList>
            <consortium name="The C. elegans sequencing consortium"/>
        </authorList>
    </citation>
    <scope>NUCLEOTIDE SEQUENCE [LARGE SCALE GENOMIC DNA]</scope>
    <source>
        <strain>Bristol N2</strain>
    </source>
</reference>
<reference key="2">
    <citation type="journal article" date="2014" name="Dev. Biol.">
        <title>SUMV-1 antagonizes the activity of synthetic multivulva genes in Caenorhabditis elegans.</title>
        <authorList>
            <person name="Yucel D."/>
            <person name="Hoe M."/>
            <person name="Llamosas E."/>
            <person name="Kant S."/>
            <person name="Jamieson C."/>
            <person name="Young P.A."/>
            <person name="Crossley M."/>
            <person name="Nicholas H.R."/>
        </authorList>
    </citation>
    <scope>FUNCTION</scope>
    <scope>SUBCELLULAR LOCATION</scope>
    <scope>DEVELOPMENTAL STAGE</scope>
</reference>
<gene>
    <name evidence="4" type="primary">sumv-1</name>
    <name evidence="4" type="ORF">C34E10.8</name>
</gene>
<sequence>MKQTTRPPAQYIVAPGTRFRLVANEYDKNKYGQCNYASYRTLVRCKQIRSKEELAKHGGRCEEHVEFSKTLENNHKKEVMRCHAENDSKMQRRRFDPWIASNEYISDDDDYLQAAQTVPQRLPDVANDDILDNNSLRYAEYYTDKDILNIKMDLVQKDIDDLIEFKELVTSQAQKEHELLGNDEEEDYPTDMAQRRIFKASTKYSRNDYLTLTTIDPVFHQCCVGPDMDDSLVIVHTMHSILDKIDNFEPIDSEKQCNKPALHLSKFCFDHIILDRSQKMFDVCNACGLTAIGGVDPKCSFHIKSSAIAETTSCPCNRCVQPGEHASPKDEKNSITCYLNSSDDDEPTLGNLSRIESMVSPMQQFSNQSNTLTAPLPRRYQGPPAQVLRPPQMGPPPGINQVPYQPKANRTPPMTSQQLHEQQKLKMQEEEMMSQTCASDFRVRPIDASQFGGGKKKQRLPPRRSPSFGTSPNSYQFHQQSQKKMPSIISTAYNSSPGKMNFQGWKNQSTSSATRPLPQPRFPVHAARSQQPKMIPLEQTQDSIEDDIGPSPMFQGPEPSRRGVPYYKNAYRRTELPSRHAQHSPLTPSTSTSSSQLLAPPKSPQPGTSSQTFRSQASRLPIAPHRAIAAGLNPADVGTRPAYRSQMAGQRPGMTPSAQQGSPQLISPPRQGSMMPVAMNQSPQAVRRQTPVPPYRLMGPQRVTTSYTVVRSGSSSSVAGPSRSSVASGSQHTALDTVQHDPRLANINVRTFLSIGNRDLSTLTQDEIDLLMAGNSPEKGGRKAGAPGAKESSKAAGGAQKGTSAASTSVPEPTKSSESSVDPQSDVSFSNPSPAPEVIEKVAPAAMTITSNKRKIDETLASESTSSEATLIHDTTSSSSAETVSGEPPAKKSSDVSAPVPSPEKEKEKIDRPKTPKSSTKRTTPTPSGRTPRAAAIAANQAISHSKPNVPSASTSSSAASTDQENPLDLLAELSVAAAAEEQQQAIGSTSKNGGSTKKTQRKSPSRSSIGKKRENSEEYEEEL</sequence>
<organism>
    <name type="scientific">Caenorhabditis elegans</name>
    <dbReference type="NCBI Taxonomy" id="6239"/>
    <lineage>
        <taxon>Eukaryota</taxon>
        <taxon>Metazoa</taxon>
        <taxon>Ecdysozoa</taxon>
        <taxon>Nematoda</taxon>
        <taxon>Chromadorea</taxon>
        <taxon>Rhabditida</taxon>
        <taxon>Rhabditina</taxon>
        <taxon>Rhabditomorpha</taxon>
        <taxon>Rhabditoidea</taxon>
        <taxon>Rhabditidae</taxon>
        <taxon>Peloderinae</taxon>
        <taxon>Caenorhabditis</taxon>
    </lineage>
</organism>
<keyword id="KW-0966">Cell projection</keyword>
<keyword id="KW-0963">Cytoplasm</keyword>
<keyword id="KW-0217">Developmental protein</keyword>
<keyword id="KW-0539">Nucleus</keyword>
<keyword id="KW-1185">Reference proteome</keyword>